<evidence type="ECO:0000255" key="1">
    <source>
        <dbReference type="HAMAP-Rule" id="MF_00223"/>
    </source>
</evidence>
<reference key="1">
    <citation type="submission" date="2008-05" db="EMBL/GenBank/DDBJ databases">
        <title>Complete sequence of Shigella boydii serotype 18 strain BS512.</title>
        <authorList>
            <person name="Rasko D.A."/>
            <person name="Rosovitz M."/>
            <person name="Maurelli A.T."/>
            <person name="Myers G."/>
            <person name="Seshadri R."/>
            <person name="Cer R."/>
            <person name="Jiang L."/>
            <person name="Ravel J."/>
            <person name="Sebastian Y."/>
        </authorList>
    </citation>
    <scope>NUCLEOTIDE SEQUENCE [LARGE SCALE GENOMIC DNA]</scope>
    <source>
        <strain>CDC 3083-94 / BS512</strain>
    </source>
</reference>
<sequence>MPSLSKEAALVHEALVARGLETPLRPPVHEMDNETRKSLIAGHMTEIMQLLNLDLADDSLMETPHRIAKMYVDEIFSGLDYANFPKITLIENKMKVDEMVTVRDITLTSTCEHHFVTIDGKATVAYIPKDSVIGLSKINRIVQFFAQRPQVQERLTQQILIALQTLLGTNNVAVSIDAVHYCVKARGIRDATSATTTTSLGGLFKSSQNTRHEFLRAVRHHN</sequence>
<gene>
    <name evidence="1" type="primary">folE</name>
    <name type="ordered locus">SbBS512_E0813</name>
</gene>
<keyword id="KW-0342">GTP-binding</keyword>
<keyword id="KW-0378">Hydrolase</keyword>
<keyword id="KW-0479">Metal-binding</keyword>
<keyword id="KW-0547">Nucleotide-binding</keyword>
<keyword id="KW-0554">One-carbon metabolism</keyword>
<keyword id="KW-1185">Reference proteome</keyword>
<keyword id="KW-0862">Zinc</keyword>
<proteinExistence type="inferred from homology"/>
<dbReference type="EC" id="3.5.4.16" evidence="1"/>
<dbReference type="EMBL" id="CP001063">
    <property type="protein sequence ID" value="ACD09907.1"/>
    <property type="molecule type" value="Genomic_DNA"/>
</dbReference>
<dbReference type="RefSeq" id="WP_001139613.1">
    <property type="nucleotide sequence ID" value="NC_010658.1"/>
</dbReference>
<dbReference type="SMR" id="B2TVT9"/>
<dbReference type="STRING" id="344609.SbBS512_E0813"/>
<dbReference type="GeneID" id="93775029"/>
<dbReference type="KEGG" id="sbc:SbBS512_E0813"/>
<dbReference type="HOGENOM" id="CLU_049768_3_2_6"/>
<dbReference type="UniPathway" id="UPA00848">
    <property type="reaction ID" value="UER00151"/>
</dbReference>
<dbReference type="Proteomes" id="UP000001030">
    <property type="component" value="Chromosome"/>
</dbReference>
<dbReference type="GO" id="GO:0005737">
    <property type="term" value="C:cytoplasm"/>
    <property type="evidence" value="ECO:0007669"/>
    <property type="project" value="TreeGrafter"/>
</dbReference>
<dbReference type="GO" id="GO:0005525">
    <property type="term" value="F:GTP binding"/>
    <property type="evidence" value="ECO:0007669"/>
    <property type="project" value="UniProtKB-KW"/>
</dbReference>
<dbReference type="GO" id="GO:0003934">
    <property type="term" value="F:GTP cyclohydrolase I activity"/>
    <property type="evidence" value="ECO:0007669"/>
    <property type="project" value="UniProtKB-UniRule"/>
</dbReference>
<dbReference type="GO" id="GO:0008270">
    <property type="term" value="F:zinc ion binding"/>
    <property type="evidence" value="ECO:0007669"/>
    <property type="project" value="UniProtKB-UniRule"/>
</dbReference>
<dbReference type="GO" id="GO:0006730">
    <property type="term" value="P:one-carbon metabolic process"/>
    <property type="evidence" value="ECO:0007669"/>
    <property type="project" value="UniProtKB-UniRule"/>
</dbReference>
<dbReference type="GO" id="GO:0006729">
    <property type="term" value="P:tetrahydrobiopterin biosynthetic process"/>
    <property type="evidence" value="ECO:0007669"/>
    <property type="project" value="TreeGrafter"/>
</dbReference>
<dbReference type="GO" id="GO:0046654">
    <property type="term" value="P:tetrahydrofolate biosynthetic process"/>
    <property type="evidence" value="ECO:0007669"/>
    <property type="project" value="UniProtKB-UniRule"/>
</dbReference>
<dbReference type="CDD" id="cd00642">
    <property type="entry name" value="GTP_cyclohydro1"/>
    <property type="match status" value="1"/>
</dbReference>
<dbReference type="FunFam" id="1.10.286.10:FF:000002">
    <property type="entry name" value="GTP cyclohydrolase 1"/>
    <property type="match status" value="1"/>
</dbReference>
<dbReference type="FunFam" id="3.30.1130.10:FF:000001">
    <property type="entry name" value="GTP cyclohydrolase 1"/>
    <property type="match status" value="1"/>
</dbReference>
<dbReference type="Gene3D" id="1.10.286.10">
    <property type="match status" value="1"/>
</dbReference>
<dbReference type="Gene3D" id="3.30.1130.10">
    <property type="match status" value="1"/>
</dbReference>
<dbReference type="HAMAP" id="MF_00223">
    <property type="entry name" value="FolE"/>
    <property type="match status" value="1"/>
</dbReference>
<dbReference type="InterPro" id="IPR043133">
    <property type="entry name" value="GTP-CH-I_C/QueF"/>
</dbReference>
<dbReference type="InterPro" id="IPR043134">
    <property type="entry name" value="GTP-CH-I_N"/>
</dbReference>
<dbReference type="InterPro" id="IPR001474">
    <property type="entry name" value="GTP_CycHdrlase_I"/>
</dbReference>
<dbReference type="InterPro" id="IPR018234">
    <property type="entry name" value="GTP_CycHdrlase_I_CS"/>
</dbReference>
<dbReference type="InterPro" id="IPR020602">
    <property type="entry name" value="GTP_CycHdrlase_I_dom"/>
</dbReference>
<dbReference type="NCBIfam" id="TIGR00063">
    <property type="entry name" value="folE"/>
    <property type="match status" value="1"/>
</dbReference>
<dbReference type="NCBIfam" id="NF006824">
    <property type="entry name" value="PRK09347.1-1"/>
    <property type="match status" value="1"/>
</dbReference>
<dbReference type="NCBIfam" id="NF006826">
    <property type="entry name" value="PRK09347.1-3"/>
    <property type="match status" value="1"/>
</dbReference>
<dbReference type="PANTHER" id="PTHR11109:SF7">
    <property type="entry name" value="GTP CYCLOHYDROLASE 1"/>
    <property type="match status" value="1"/>
</dbReference>
<dbReference type="PANTHER" id="PTHR11109">
    <property type="entry name" value="GTP CYCLOHYDROLASE I"/>
    <property type="match status" value="1"/>
</dbReference>
<dbReference type="Pfam" id="PF01227">
    <property type="entry name" value="GTP_cyclohydroI"/>
    <property type="match status" value="1"/>
</dbReference>
<dbReference type="SUPFAM" id="SSF55620">
    <property type="entry name" value="Tetrahydrobiopterin biosynthesis enzymes-like"/>
    <property type="match status" value="1"/>
</dbReference>
<dbReference type="PROSITE" id="PS00859">
    <property type="entry name" value="GTP_CYCLOHYDROL_1_1"/>
    <property type="match status" value="1"/>
</dbReference>
<dbReference type="PROSITE" id="PS00860">
    <property type="entry name" value="GTP_CYCLOHYDROL_1_2"/>
    <property type="match status" value="1"/>
</dbReference>
<feature type="chain" id="PRO_1000100198" description="GTP cyclohydrolase 1">
    <location>
        <begin position="1"/>
        <end position="222"/>
    </location>
</feature>
<feature type="binding site" evidence="1">
    <location>
        <position position="111"/>
    </location>
    <ligand>
        <name>Zn(2+)</name>
        <dbReference type="ChEBI" id="CHEBI:29105"/>
    </ligand>
</feature>
<feature type="binding site" evidence="1">
    <location>
        <position position="114"/>
    </location>
    <ligand>
        <name>Zn(2+)</name>
        <dbReference type="ChEBI" id="CHEBI:29105"/>
    </ligand>
</feature>
<feature type="binding site" evidence="1">
    <location>
        <position position="182"/>
    </location>
    <ligand>
        <name>Zn(2+)</name>
        <dbReference type="ChEBI" id="CHEBI:29105"/>
    </ligand>
</feature>
<organism>
    <name type="scientific">Shigella boydii serotype 18 (strain CDC 3083-94 / BS512)</name>
    <dbReference type="NCBI Taxonomy" id="344609"/>
    <lineage>
        <taxon>Bacteria</taxon>
        <taxon>Pseudomonadati</taxon>
        <taxon>Pseudomonadota</taxon>
        <taxon>Gammaproteobacteria</taxon>
        <taxon>Enterobacterales</taxon>
        <taxon>Enterobacteriaceae</taxon>
        <taxon>Shigella</taxon>
    </lineage>
</organism>
<accession>B2TVT9</accession>
<protein>
    <recommendedName>
        <fullName evidence="1">GTP cyclohydrolase 1</fullName>
        <ecNumber evidence="1">3.5.4.16</ecNumber>
    </recommendedName>
    <alternativeName>
        <fullName evidence="1">GTP cyclohydrolase I</fullName>
        <shortName evidence="1">GTP-CH-I</shortName>
    </alternativeName>
</protein>
<comment type="catalytic activity">
    <reaction evidence="1">
        <text>GTP + H2O = 7,8-dihydroneopterin 3'-triphosphate + formate + H(+)</text>
        <dbReference type="Rhea" id="RHEA:17473"/>
        <dbReference type="ChEBI" id="CHEBI:15377"/>
        <dbReference type="ChEBI" id="CHEBI:15378"/>
        <dbReference type="ChEBI" id="CHEBI:15740"/>
        <dbReference type="ChEBI" id="CHEBI:37565"/>
        <dbReference type="ChEBI" id="CHEBI:58462"/>
        <dbReference type="EC" id="3.5.4.16"/>
    </reaction>
</comment>
<comment type="pathway">
    <text evidence="1">Cofactor biosynthesis; 7,8-dihydroneopterin triphosphate biosynthesis; 7,8-dihydroneopterin triphosphate from GTP: step 1/1.</text>
</comment>
<comment type="subunit">
    <text evidence="1">Homomer.</text>
</comment>
<comment type="similarity">
    <text evidence="1">Belongs to the GTP cyclohydrolase I family.</text>
</comment>
<name>GCH1_SHIB3</name>